<reference key="1">
    <citation type="journal article" date="2004" name="Proc. Natl. Acad. Sci. U.S.A.">
        <title>The diploid genome sequence of Candida albicans.</title>
        <authorList>
            <person name="Jones T."/>
            <person name="Federspiel N.A."/>
            <person name="Chibana H."/>
            <person name="Dungan J."/>
            <person name="Kalman S."/>
            <person name="Magee B.B."/>
            <person name="Newport G."/>
            <person name="Thorstenson Y.R."/>
            <person name="Agabian N."/>
            <person name="Magee P.T."/>
            <person name="Davis R.W."/>
            <person name="Scherer S."/>
        </authorList>
    </citation>
    <scope>NUCLEOTIDE SEQUENCE [LARGE SCALE GENOMIC DNA]</scope>
    <source>
        <strain>SC5314 / ATCC MYA-2876</strain>
    </source>
</reference>
<reference key="2">
    <citation type="journal article" date="2007" name="Genome Biol.">
        <title>Assembly of the Candida albicans genome into sixteen supercontigs aligned on the eight chromosomes.</title>
        <authorList>
            <person name="van het Hoog M."/>
            <person name="Rast T.J."/>
            <person name="Martchenko M."/>
            <person name="Grindle S."/>
            <person name="Dignard D."/>
            <person name="Hogues H."/>
            <person name="Cuomo C."/>
            <person name="Berriman M."/>
            <person name="Scherer S."/>
            <person name="Magee B.B."/>
            <person name="Whiteway M."/>
            <person name="Chibana H."/>
            <person name="Nantel A."/>
            <person name="Magee P.T."/>
        </authorList>
    </citation>
    <scope>GENOME REANNOTATION</scope>
    <source>
        <strain>SC5314 / ATCC MYA-2876</strain>
    </source>
</reference>
<reference key="3">
    <citation type="journal article" date="2013" name="Genome Biol.">
        <title>Assembly of a phased diploid Candida albicans genome facilitates allele-specific measurements and provides a simple model for repeat and indel structure.</title>
        <authorList>
            <person name="Muzzey D."/>
            <person name="Schwartz K."/>
            <person name="Weissman J.S."/>
            <person name="Sherlock G."/>
        </authorList>
    </citation>
    <scope>NUCLEOTIDE SEQUENCE [LARGE SCALE GENOMIC DNA]</scope>
    <scope>GENOME REANNOTATION</scope>
    <source>
        <strain>SC5314 / ATCC MYA-2876</strain>
    </source>
</reference>
<reference key="4">
    <citation type="journal article" date="2010" name="Antimicrob. Agents Chemother.">
        <title>A clinical isolate of Candida albicans with mutations in ERG11 (encoding sterol 14alpha-demethylase) and ERG5 (encoding C22 desaturase) is cross resistant to azoles and amphotericin B.</title>
        <authorList>
            <person name="Martel C.M."/>
            <person name="Parker J.E."/>
            <person name="Bader O."/>
            <person name="Weig M."/>
            <person name="Gross U."/>
            <person name="Warrilow A.G."/>
            <person name="Kelly D.E."/>
            <person name="Kelly S.L."/>
        </authorList>
    </citation>
    <scope>FUNCTION</scope>
</reference>
<comment type="function">
    <text evidence="2 5 6">C-22 sterol desaturase; part of the third module of ergosterol biosynthesis pathway that includes the late steps of the pathway (Probable). ERG5 converts 5-dehydroepisterol into ergosta-5,7,22,24(28)-tetraen-3beta-ol by forming the C-22(23) double bond in the sterol side chain (By similarity). The third module or late pathway involves the ergosterol synthesis itself through consecutive reactions that mainly occur in the endoplasmic reticulum (ER) membrane. Firstly, the squalene synthase ERG9 catalyzes the condensation of 2 farnesyl pyrophosphate moieties to form squalene, which is the precursor of all steroids. Squalene synthase is crucial for balancing the incorporation of farnesyl diphosphate (FPP) into sterol and nonsterol isoprene synthesis. Secondly, the squalene epoxidase ERG1 catalyzes the stereospecific oxidation of squalene to (S)-2,3-epoxysqualene, which is considered to be a rate-limiting enzyme in steroid biosynthesis. Then, the lanosterol synthase ERG7 catalyzes the cyclization of (S)-2,3 oxidosqualene to lanosterol, a reaction that forms the sterol core. In the next steps, lanosterol is transformed to zymosterol through a complex process involving various demethylation, reduction and desaturation reactions. The lanosterol 14-alpha-demethylase ERG11 (also known as CYP51) catalyzes C14-demethylation of lanosterol to produce 4,4'-dimethyl cholesta-8,14,24-triene-3-beta-ol, which is critical for ergosterol biosynthesis. The C-14 reductase ERG24 reduces the C14=C15 double bond of 4,4-dimethyl-cholesta-8,14,24-trienol to produce 4,4-dimethyl-cholesta-8,24-dienol. 4,4-dimethyl-cholesta-8,24-dienol is substrate of the C-4 demethylation complex ERG25-ERG26-ERG27 in which ERG25 catalyzes the three-step monooxygenation required for the demethylation of 4,4-dimethyl and 4alpha-methylsterols, ERG26 catalyzes the oxidative decarboxylation that results in a reduction of the 3-beta-hydroxy group at the C-3 carbon to an oxo group, and ERG27 is responsible for the reduction of the keto group on the C-3. ERG28 has a role as a scaffold to help anchor ERG25, ERG26 and ERG27 to the endoplasmic reticulum and ERG29 regulates the activity of the iron-containing C4-methylsterol oxidase ERG25. Then, the sterol 24-C-methyltransferase ERG6 catalyzes the methyl transfer from S-adenosyl-methionine to the C-24 of zymosterol to form fecosterol. The C-8 sterol isomerase ERG2 catalyzes the reaction which results in unsaturation at C-7 in the B ring of sterols and thus converts fecosterol to episterol. The sterol-C5-desaturase ERG3 then catalyzes the introduction of a C-5 double bond in the B ring to produce 5-dehydroepisterol. The C-22 sterol desaturase ERG5 further converts 5-dehydroepisterol into ergosta-5,7,22,24(28)-tetraen-3beta-ol by forming the C-22(23) double bond in the sterol side chain. Finally, ergosta-5,7,22,24(28)-tetraen-3beta-ol is substrate of the C-24(28) sterol reductase ERG4 to produce ergosterol (Probable).</text>
</comment>
<comment type="catalytic activity">
    <reaction evidence="2">
        <text>5-dehydroepisterol + NADPH + O2 + H(+) = ergosta-5,7,22,24(28)-tetraen-3beta-ol + NADP(+) + 2 H2O</text>
        <dbReference type="Rhea" id="RHEA:33467"/>
        <dbReference type="ChEBI" id="CHEBI:15377"/>
        <dbReference type="ChEBI" id="CHEBI:15378"/>
        <dbReference type="ChEBI" id="CHEBI:15379"/>
        <dbReference type="ChEBI" id="CHEBI:18249"/>
        <dbReference type="ChEBI" id="CHEBI:52972"/>
        <dbReference type="ChEBI" id="CHEBI:57783"/>
        <dbReference type="ChEBI" id="CHEBI:58349"/>
        <dbReference type="EC" id="1.14.19.41"/>
    </reaction>
    <physiologicalReaction direction="left-to-right" evidence="2">
        <dbReference type="Rhea" id="RHEA:33468"/>
    </physiologicalReaction>
</comment>
<comment type="cofactor">
    <cofactor evidence="1">
        <name>heme</name>
        <dbReference type="ChEBI" id="CHEBI:30413"/>
    </cofactor>
</comment>
<comment type="pathway">
    <text evidence="6">Steroid metabolism; ergosterol biosynthesis; ergosterol from zymosterol: step 4/5.</text>
</comment>
<comment type="subcellular location">
    <subcellularLocation>
        <location evidence="5">Endoplasmic reticulum membrane</location>
        <topology evidence="3">Single-pass membrane protein</topology>
    </subcellularLocation>
</comment>
<comment type="similarity">
    <text evidence="5">Belongs to the cytochrome P450 family.</text>
</comment>
<dbReference type="EC" id="1.14.19.41" evidence="2"/>
<dbReference type="EMBL" id="CP017629">
    <property type="protein sequence ID" value="AOW30631.1"/>
    <property type="molecule type" value="Genomic_DNA"/>
</dbReference>
<dbReference type="RefSeq" id="XP_717000.1">
    <property type="nucleotide sequence ID" value="XM_711907.1"/>
</dbReference>
<dbReference type="SMR" id="G1UB11"/>
<dbReference type="FunCoup" id="G1UB11">
    <property type="interactions" value="1619"/>
</dbReference>
<dbReference type="STRING" id="237561.G1UB11"/>
<dbReference type="EnsemblFungi" id="C7_02840C_A-T">
    <property type="protein sequence ID" value="C7_02840C_A-T-p1"/>
    <property type="gene ID" value="C7_02840C_A"/>
</dbReference>
<dbReference type="GeneID" id="3641400"/>
<dbReference type="KEGG" id="cal:CAALFM_C702840CA"/>
<dbReference type="CGD" id="CAL0000198637">
    <property type="gene designation" value="ERG5"/>
</dbReference>
<dbReference type="VEuPathDB" id="FungiDB:C7_02840C_A"/>
<dbReference type="eggNOG" id="KOG0157">
    <property type="taxonomic scope" value="Eukaryota"/>
</dbReference>
<dbReference type="HOGENOM" id="CLU_023517_0_0_1"/>
<dbReference type="InParanoid" id="G1UB11"/>
<dbReference type="OMA" id="KCIGLEY"/>
<dbReference type="OrthoDB" id="1372046at2759"/>
<dbReference type="UniPathway" id="UPA00768">
    <property type="reaction ID" value="UER00763"/>
</dbReference>
<dbReference type="Proteomes" id="UP000000559">
    <property type="component" value="Chromosome 7"/>
</dbReference>
<dbReference type="GO" id="GO:0005783">
    <property type="term" value="C:endoplasmic reticulum"/>
    <property type="evidence" value="ECO:0000250"/>
    <property type="project" value="CGD"/>
</dbReference>
<dbReference type="GO" id="GO:0005789">
    <property type="term" value="C:endoplasmic reticulum membrane"/>
    <property type="evidence" value="ECO:0007669"/>
    <property type="project" value="UniProtKB-SubCell"/>
</dbReference>
<dbReference type="GO" id="GO:0005886">
    <property type="term" value="C:plasma membrane"/>
    <property type="evidence" value="ECO:0000314"/>
    <property type="project" value="CGD"/>
</dbReference>
<dbReference type="GO" id="GO:0000249">
    <property type="term" value="F:C-22 sterol desaturase (NADPH) activity"/>
    <property type="evidence" value="ECO:0000250"/>
    <property type="project" value="CGD"/>
</dbReference>
<dbReference type="GO" id="GO:0020037">
    <property type="term" value="F:heme binding"/>
    <property type="evidence" value="ECO:0007669"/>
    <property type="project" value="InterPro"/>
</dbReference>
<dbReference type="GO" id="GO:0005506">
    <property type="term" value="F:iron ion binding"/>
    <property type="evidence" value="ECO:0007669"/>
    <property type="project" value="InterPro"/>
</dbReference>
<dbReference type="GO" id="GO:0004497">
    <property type="term" value="F:monooxygenase activity"/>
    <property type="evidence" value="ECO:0007669"/>
    <property type="project" value="UniProtKB-KW"/>
</dbReference>
<dbReference type="GO" id="GO:0016491">
    <property type="term" value="F:oxidoreductase activity"/>
    <property type="evidence" value="ECO:0000318"/>
    <property type="project" value="GO_Central"/>
</dbReference>
<dbReference type="GO" id="GO:0009267">
    <property type="term" value="P:cellular response to starvation"/>
    <property type="evidence" value="ECO:0000315"/>
    <property type="project" value="CGD"/>
</dbReference>
<dbReference type="GO" id="GO:0006696">
    <property type="term" value="P:ergosterol biosynthetic process"/>
    <property type="evidence" value="ECO:0000250"/>
    <property type="project" value="CGD"/>
</dbReference>
<dbReference type="GO" id="GO:0030447">
    <property type="term" value="P:filamentous growth"/>
    <property type="evidence" value="ECO:0000315"/>
    <property type="project" value="CGD"/>
</dbReference>
<dbReference type="GO" id="GO:0036180">
    <property type="term" value="P:filamentous growth of a population of unicellular organisms in response to biotic stimulus"/>
    <property type="evidence" value="ECO:0000315"/>
    <property type="project" value="CGD"/>
</dbReference>
<dbReference type="GO" id="GO:0036170">
    <property type="term" value="P:filamentous growth of a population of unicellular organisms in response to starvation"/>
    <property type="evidence" value="ECO:0000315"/>
    <property type="project" value="CGD"/>
</dbReference>
<dbReference type="FunFam" id="1.10.630.10:FF:000021">
    <property type="entry name" value="Cytochrome P450 61"/>
    <property type="match status" value="1"/>
</dbReference>
<dbReference type="Gene3D" id="1.10.630.10">
    <property type="entry name" value="Cytochrome P450"/>
    <property type="match status" value="1"/>
</dbReference>
<dbReference type="InterPro" id="IPR001128">
    <property type="entry name" value="Cyt_P450"/>
</dbReference>
<dbReference type="InterPro" id="IPR017972">
    <property type="entry name" value="Cyt_P450_CS"/>
</dbReference>
<dbReference type="InterPro" id="IPR002403">
    <property type="entry name" value="Cyt_P450_E_grp-IV"/>
</dbReference>
<dbReference type="InterPro" id="IPR036396">
    <property type="entry name" value="Cyt_P450_sf"/>
</dbReference>
<dbReference type="PANTHER" id="PTHR24286:SF228">
    <property type="entry name" value="C-22 STEROL DESATURASE ERG5"/>
    <property type="match status" value="1"/>
</dbReference>
<dbReference type="PANTHER" id="PTHR24286">
    <property type="entry name" value="CYTOCHROME P450 26"/>
    <property type="match status" value="1"/>
</dbReference>
<dbReference type="Pfam" id="PF00067">
    <property type="entry name" value="p450"/>
    <property type="match status" value="1"/>
</dbReference>
<dbReference type="PRINTS" id="PR00465">
    <property type="entry name" value="EP450IV"/>
</dbReference>
<dbReference type="SUPFAM" id="SSF48264">
    <property type="entry name" value="Cytochrome P450"/>
    <property type="match status" value="1"/>
</dbReference>
<dbReference type="PROSITE" id="PS00086">
    <property type="entry name" value="CYTOCHROME_P450"/>
    <property type="match status" value="1"/>
</dbReference>
<name>ERG5_CANAL</name>
<evidence type="ECO:0000250" key="1">
    <source>
        <dbReference type="UniProtKB" id="P04798"/>
    </source>
</evidence>
<evidence type="ECO:0000250" key="2">
    <source>
        <dbReference type="UniProtKB" id="P54781"/>
    </source>
</evidence>
<evidence type="ECO:0000255" key="3"/>
<evidence type="ECO:0000303" key="4">
    <source>
    </source>
</evidence>
<evidence type="ECO:0000305" key="5"/>
<evidence type="ECO:0000305" key="6">
    <source>
    </source>
</evidence>
<gene>
    <name evidence="4" type="primary">ERG5</name>
    <name evidence="4" type="synonym">CYP61</name>
    <name type="ordered locus">orf19.5178</name>
    <name type="ORF">CAALFM_C702840CA</name>
</gene>
<sequence>MNSTEVDNLPFQQQLTSFVELAVAKATGSPITTLFTIIFLILSYDQLSYQINKGSIAGPRFKFYPIIGPFLESLDPKFEEYKAKWDSGELSCVSIFHKFVVIASSRDLARKILSSPKYVKPCVVDVAIKILRPTNWVFLDGKQHTDYRRSLNGLFSSKALEIYIPVQEKYMDIYLERFCKYDGPREFFPEFRELLCALSLRTFCGDYITEDQIALVADNYYRVTAALELVNFPIIIPYTKTWYGKKIADDTMKIFENCAAMAKKHINENNGTPKCVMDEWIHLMKEAREKHSEDPDSKLLVREFSNREISEAIFTFLFASQDASSSLACWLFQIVADRPDIVAKIREEQLRVRNNNPDVRLSLDLINEMTYTNNVVKESLRYRPPVLMVPYVVKKSFPVTESYTAPKGAMIIPTLYPALHDPEVYDEPDSFIPERWENASGDMYKRNWLVFGTGPHVCLGKNYVLMLFTGMLGKFVMNSDMIHHKTDLSEEIKVFATIFPKDDLILEWKKRDPLKSL</sequence>
<protein>
    <recommendedName>
        <fullName evidence="4">C-22 sterol desaturase ERG5</fullName>
        <ecNumber evidence="2">1.14.19.41</ecNumber>
    </recommendedName>
    <alternativeName>
        <fullName evidence="4">Cytochrome P450 61</fullName>
    </alternativeName>
    <alternativeName>
        <fullName evidence="4">Ergosterol biosynthetic protein 5</fullName>
    </alternativeName>
</protein>
<proteinExistence type="inferred from homology"/>
<accession>G1UB11</accession>
<feature type="chain" id="PRO_0000454179" description="C-22 sterol desaturase ERG5">
    <location>
        <begin position="1"/>
        <end position="517"/>
    </location>
</feature>
<feature type="transmembrane region" description="Helical" evidence="3">
    <location>
        <begin position="21"/>
        <end position="41"/>
    </location>
</feature>
<feature type="binding site" description="axial binding residue" evidence="1">
    <location>
        <position position="458"/>
    </location>
    <ligand>
        <name>heme</name>
        <dbReference type="ChEBI" id="CHEBI:30413"/>
    </ligand>
    <ligandPart>
        <name>Fe</name>
        <dbReference type="ChEBI" id="CHEBI:18248"/>
    </ligandPart>
</feature>
<organism>
    <name type="scientific">Candida albicans (strain SC5314 / ATCC MYA-2876)</name>
    <name type="common">Yeast</name>
    <dbReference type="NCBI Taxonomy" id="237561"/>
    <lineage>
        <taxon>Eukaryota</taxon>
        <taxon>Fungi</taxon>
        <taxon>Dikarya</taxon>
        <taxon>Ascomycota</taxon>
        <taxon>Saccharomycotina</taxon>
        <taxon>Pichiomycetes</taxon>
        <taxon>Debaryomycetaceae</taxon>
        <taxon>Candida/Lodderomyces clade</taxon>
        <taxon>Candida</taxon>
    </lineage>
</organism>
<keyword id="KW-0256">Endoplasmic reticulum</keyword>
<keyword id="KW-0349">Heme</keyword>
<keyword id="KW-0408">Iron</keyword>
<keyword id="KW-0444">Lipid biosynthesis</keyword>
<keyword id="KW-0443">Lipid metabolism</keyword>
<keyword id="KW-0472">Membrane</keyword>
<keyword id="KW-0479">Metal-binding</keyword>
<keyword id="KW-0503">Monooxygenase</keyword>
<keyword id="KW-0560">Oxidoreductase</keyword>
<keyword id="KW-1185">Reference proteome</keyword>
<keyword id="KW-0752">Steroid biosynthesis</keyword>
<keyword id="KW-0753">Steroid metabolism</keyword>
<keyword id="KW-0756">Sterol biosynthesis</keyword>
<keyword id="KW-1207">Sterol metabolism</keyword>
<keyword id="KW-0812">Transmembrane</keyword>
<keyword id="KW-1133">Transmembrane helix</keyword>